<sequence length="317" mass="36505">MSEGAGTFRMVPEEEQELRAQLERLTTKDHGPVFGPCSQLPRHTLQKAKDELNEKEETREEAVRELQELVQAEAASGQELAVAVAERVQGKDSAFFLRFIRARKFHVGRAYELLRGYVNFRLQYPELFDSLSPEAVRCTVEAGYPGVLSTRDKYGRVVMLFNIENWDSEEITFDEILQAYCVILEKLLENEETQINGFCIIENFKGFTMQQAAGLRPSDLRKMVDMLQDSFPARFKAIHFIYQPWYFTTTYNVVKPFLKSKLLQRVFVHGEDLSSFYQEFDEDILPSDFGGTLPKYDGKAVAEQLFGPRDQTENTAF</sequence>
<organism>
    <name type="scientific">Bos taurus</name>
    <name type="common">Bovine</name>
    <dbReference type="NCBI Taxonomy" id="9913"/>
    <lineage>
        <taxon>Eukaryota</taxon>
        <taxon>Metazoa</taxon>
        <taxon>Chordata</taxon>
        <taxon>Craniata</taxon>
        <taxon>Vertebrata</taxon>
        <taxon>Euteleostomi</taxon>
        <taxon>Mammalia</taxon>
        <taxon>Eutheria</taxon>
        <taxon>Laurasiatheria</taxon>
        <taxon>Artiodactyla</taxon>
        <taxon>Ruminantia</taxon>
        <taxon>Pecora</taxon>
        <taxon>Bovidae</taxon>
        <taxon>Bovinae</taxon>
        <taxon>Bos</taxon>
    </lineage>
</organism>
<feature type="initiator methionine" description="Removed" evidence="4">
    <location>
        <position position="1"/>
    </location>
</feature>
<feature type="chain" id="PRO_0000079329" description="Retinaldehyde-binding protein 1">
    <location>
        <begin position="2"/>
        <end position="317"/>
    </location>
</feature>
<feature type="domain" description="CRAL-TRIO" evidence="3">
    <location>
        <begin position="136"/>
        <end position="297"/>
    </location>
</feature>
<feature type="binding site" evidence="1">
    <location>
        <position position="180"/>
    </location>
    <ligand>
        <name>11-cis-retinal</name>
        <dbReference type="ChEBI" id="CHEBI:16066"/>
    </ligand>
</feature>
<feature type="binding site" evidence="1">
    <location>
        <position position="202"/>
    </location>
    <ligand>
        <name>11-cis-retinal</name>
        <dbReference type="ChEBI" id="CHEBI:16066"/>
    </ligand>
</feature>
<feature type="modified residue" description="N-acetylserine" evidence="4">
    <location>
        <position position="2"/>
    </location>
</feature>
<feature type="sequence conflict" description="In Ref. 1; AAA30751." evidence="5" ref="1">
    <original>N</original>
    <variation>I</variation>
    <location>
        <position position="162"/>
    </location>
</feature>
<feature type="sequence conflict" description="In Ref. 1; AAA30751." evidence="5" ref="1">
    <original>D</original>
    <variation>E</variation>
    <location>
        <position position="272"/>
    </location>
</feature>
<keyword id="KW-0007">Acetylation</keyword>
<keyword id="KW-0963">Cytoplasm</keyword>
<keyword id="KW-0903">Direct protein sequencing</keyword>
<keyword id="KW-1185">Reference proteome</keyword>
<keyword id="KW-0683">Retinol-binding</keyword>
<keyword id="KW-0716">Sensory transduction</keyword>
<keyword id="KW-0813">Transport</keyword>
<keyword id="KW-0844">Vision</keyword>
<protein>
    <recommendedName>
        <fullName>Retinaldehyde-binding protein 1</fullName>
    </recommendedName>
    <alternativeName>
        <fullName>Cellular retinaldehyde-binding protein</fullName>
    </alternativeName>
</protein>
<comment type="function">
    <text>Soluble retinoid carrier essential the proper function of both rod and cone photoreceptors. Participates in the regeneration of active 11-cis-retinol and 11-cis-retinaldehyde, from the inactive 11-trans products of the rhodopsin photocycle and in the de novo synthesis of these retinoids from 11-trans metabolic precursors. The cycling of retinoids between photoreceptor and adjacent pigment epithelium cells is known as the 'visual cycle'.</text>
</comment>
<comment type="subunit">
    <text evidence="2">Interacts with DEGS1; the interaction increases synthesis of chromophore-precursors by DEGS1.</text>
</comment>
<comment type="subcellular location">
    <subcellularLocation>
        <location>Cytoplasm</location>
    </subcellularLocation>
</comment>
<comment type="tissue specificity">
    <text>Retina and pineal gland.</text>
</comment>
<accession>P10123</accession>
<accession>Q17QW7</accession>
<name>RLBP1_BOVIN</name>
<gene>
    <name type="primary">RLBP1</name>
    <name type="synonym">CRALBP</name>
</gene>
<dbReference type="EMBL" id="J04214">
    <property type="protein sequence ID" value="AAA30751.1"/>
    <property type="molecule type" value="mRNA"/>
</dbReference>
<dbReference type="EMBL" id="BC118140">
    <property type="protein sequence ID" value="AAI18141.1"/>
    <property type="molecule type" value="mRNA"/>
</dbReference>
<dbReference type="PIR" id="A31955">
    <property type="entry name" value="A31955"/>
</dbReference>
<dbReference type="RefSeq" id="NP_776876.2">
    <property type="nucleotide sequence ID" value="NM_174451.3"/>
</dbReference>
<dbReference type="RefSeq" id="XP_059734929.1">
    <property type="nucleotide sequence ID" value="XM_059878946.1"/>
</dbReference>
<dbReference type="SMR" id="P10123"/>
<dbReference type="FunCoup" id="P10123">
    <property type="interactions" value="515"/>
</dbReference>
<dbReference type="STRING" id="9913.ENSBTAP00000045055"/>
<dbReference type="BindingDB" id="P10123"/>
<dbReference type="iPTMnet" id="P10123"/>
<dbReference type="PaxDb" id="9913-ENSBTAP00000045055"/>
<dbReference type="Ensembl" id="ENSBTAT00000047900.4">
    <property type="protein sequence ID" value="ENSBTAP00000045055.3"/>
    <property type="gene ID" value="ENSBTAG00000033721.4"/>
</dbReference>
<dbReference type="GeneID" id="282038"/>
<dbReference type="KEGG" id="bta:282038"/>
<dbReference type="CTD" id="6017"/>
<dbReference type="VEuPathDB" id="HostDB:ENSBTAG00000033721"/>
<dbReference type="VGNC" id="VGNC:33989">
    <property type="gene designation" value="RLBP1"/>
</dbReference>
<dbReference type="eggNOG" id="KOG1471">
    <property type="taxonomic scope" value="Eukaryota"/>
</dbReference>
<dbReference type="GeneTree" id="ENSGT00940000160026"/>
<dbReference type="HOGENOM" id="CLU_046597_4_0_1"/>
<dbReference type="InParanoid" id="P10123"/>
<dbReference type="OMA" id="IETCTLI"/>
<dbReference type="OrthoDB" id="75724at2759"/>
<dbReference type="Reactome" id="R-BTA-2187335">
    <property type="pathway name" value="The retinoid cycle in cones (daylight vision)"/>
</dbReference>
<dbReference type="Reactome" id="R-BTA-2453902">
    <property type="pathway name" value="The canonical retinoid cycle in rods (twilight vision)"/>
</dbReference>
<dbReference type="Proteomes" id="UP000009136">
    <property type="component" value="Chromosome 21"/>
</dbReference>
<dbReference type="Bgee" id="ENSBTAG00000033721">
    <property type="expression patterns" value="Expressed in retina and 39 other cell types or tissues"/>
</dbReference>
<dbReference type="GO" id="GO:0005813">
    <property type="term" value="C:centrosome"/>
    <property type="evidence" value="ECO:0007669"/>
    <property type="project" value="Ensembl"/>
</dbReference>
<dbReference type="GO" id="GO:0005829">
    <property type="term" value="C:cytosol"/>
    <property type="evidence" value="ECO:0007669"/>
    <property type="project" value="Ensembl"/>
</dbReference>
<dbReference type="GO" id="GO:0005654">
    <property type="term" value="C:nucleoplasm"/>
    <property type="evidence" value="ECO:0007669"/>
    <property type="project" value="Ensembl"/>
</dbReference>
<dbReference type="GO" id="GO:0005502">
    <property type="term" value="F:11-cis retinal binding"/>
    <property type="evidence" value="ECO:0007669"/>
    <property type="project" value="Ensembl"/>
</dbReference>
<dbReference type="GO" id="GO:1902936">
    <property type="term" value="F:phosphatidylinositol bisphosphate binding"/>
    <property type="evidence" value="ECO:0000318"/>
    <property type="project" value="GO_Central"/>
</dbReference>
<dbReference type="GO" id="GO:0019841">
    <property type="term" value="F:retinol binding"/>
    <property type="evidence" value="ECO:0007669"/>
    <property type="project" value="UniProtKB-KW"/>
</dbReference>
<dbReference type="GO" id="GO:0007601">
    <property type="term" value="P:visual perception"/>
    <property type="evidence" value="ECO:0007669"/>
    <property type="project" value="UniProtKB-KW"/>
</dbReference>
<dbReference type="CDD" id="cd00170">
    <property type="entry name" value="SEC14"/>
    <property type="match status" value="1"/>
</dbReference>
<dbReference type="FunFam" id="1.10.8.20:FF:000004">
    <property type="entry name" value="Retinaldehyde binding protein 1"/>
    <property type="match status" value="1"/>
</dbReference>
<dbReference type="FunFam" id="3.40.525.10:FF:000015">
    <property type="entry name" value="retinaldehyde-binding protein 1"/>
    <property type="match status" value="1"/>
</dbReference>
<dbReference type="Gene3D" id="1.20.5.1200">
    <property type="entry name" value="Alpha-tocopherol transfer"/>
    <property type="match status" value="1"/>
</dbReference>
<dbReference type="Gene3D" id="3.40.525.10">
    <property type="entry name" value="CRAL-TRIO lipid binding domain"/>
    <property type="match status" value="1"/>
</dbReference>
<dbReference type="Gene3D" id="1.10.8.20">
    <property type="entry name" value="N-terminal domain of phosphatidylinositol transfer protein sec14p"/>
    <property type="match status" value="1"/>
</dbReference>
<dbReference type="InterPro" id="IPR001251">
    <property type="entry name" value="CRAL-TRIO_dom"/>
</dbReference>
<dbReference type="InterPro" id="IPR036865">
    <property type="entry name" value="CRAL-TRIO_dom_sf"/>
</dbReference>
<dbReference type="InterPro" id="IPR011074">
    <property type="entry name" value="CRAL/TRIO_N_dom"/>
</dbReference>
<dbReference type="InterPro" id="IPR036273">
    <property type="entry name" value="CRAL/TRIO_N_dom_sf"/>
</dbReference>
<dbReference type="PANTHER" id="PTHR10174">
    <property type="entry name" value="ALPHA-TOCOPHEROL TRANSFER PROTEIN-RELATED"/>
    <property type="match status" value="1"/>
</dbReference>
<dbReference type="PANTHER" id="PTHR10174:SF200">
    <property type="entry name" value="RETINALDEHYDE-BINDING PROTEIN 1"/>
    <property type="match status" value="1"/>
</dbReference>
<dbReference type="Pfam" id="PF00650">
    <property type="entry name" value="CRAL_TRIO"/>
    <property type="match status" value="1"/>
</dbReference>
<dbReference type="Pfam" id="PF03765">
    <property type="entry name" value="CRAL_TRIO_N"/>
    <property type="match status" value="1"/>
</dbReference>
<dbReference type="PRINTS" id="PR00180">
    <property type="entry name" value="CRETINALDHBP"/>
</dbReference>
<dbReference type="SMART" id="SM01100">
    <property type="entry name" value="CRAL_TRIO_N"/>
    <property type="match status" value="1"/>
</dbReference>
<dbReference type="SMART" id="SM00516">
    <property type="entry name" value="SEC14"/>
    <property type="match status" value="1"/>
</dbReference>
<dbReference type="SUPFAM" id="SSF52087">
    <property type="entry name" value="CRAL/TRIO domain"/>
    <property type="match status" value="1"/>
</dbReference>
<dbReference type="SUPFAM" id="SSF46938">
    <property type="entry name" value="CRAL/TRIO N-terminal domain"/>
    <property type="match status" value="1"/>
</dbReference>
<dbReference type="PROSITE" id="PS50191">
    <property type="entry name" value="CRAL_TRIO"/>
    <property type="match status" value="1"/>
</dbReference>
<reference key="1">
    <citation type="journal article" date="1988" name="J. Biol. Chem.">
        <title>Cloning of the cDNAs encoding the cellular retinaldehyde-binding protein from bovine and human retina and comparison of the protein structures.</title>
        <authorList>
            <person name="Crabb J.W."/>
            <person name="Goldflam S."/>
            <person name="Harris S.E."/>
            <person name="Saari J.C."/>
        </authorList>
    </citation>
    <scope>NUCLEOTIDE SEQUENCE [MRNA]</scope>
</reference>
<reference key="2">
    <citation type="submission" date="2006-06" db="EMBL/GenBank/DDBJ databases">
        <authorList>
            <consortium name="NIH - Mammalian Gene Collection (MGC) project"/>
        </authorList>
    </citation>
    <scope>NUCLEOTIDE SEQUENCE [LARGE SCALE MRNA]</scope>
    <source>
        <strain>Hereford</strain>
        <tissue>Ascending colon</tissue>
    </source>
</reference>
<reference key="3">
    <citation type="journal article" date="1988" name="J. Biol. Chem.">
        <title>The complete primary structure of the cellular retinaldehyde-binding protein from bovine retina.</title>
        <authorList>
            <person name="Crabb J.W."/>
            <person name="Johnson C.M."/>
            <person name="Carr S.A."/>
            <person name="Armes L.G."/>
            <person name="Saari J.C."/>
        </authorList>
    </citation>
    <scope>PROTEIN SEQUENCE OF 2-317</scope>
    <scope>ACETYLATION AT SER-2</scope>
</reference>
<reference key="4">
    <citation type="journal article" date="1991" name="J. Biol. Chem.">
        <title>Topological and epitope mapping of the cellular retinaldehyde-binding protein from retina.</title>
        <authorList>
            <person name="Crabb J.W."/>
            <person name="Gaur V.P."/>
            <person name="Garwin G.G."/>
            <person name="Marx S.V."/>
            <person name="Chapline C."/>
            <person name="Johnson C.M."/>
            <person name="Saari J.C."/>
        </authorList>
    </citation>
    <scope>PARTIAL PROTEIN SEQUENCE</scope>
</reference>
<proteinExistence type="evidence at protein level"/>
<evidence type="ECO:0000250" key="1"/>
<evidence type="ECO:0000250" key="2">
    <source>
        <dbReference type="UniProtKB" id="E1C1U1"/>
    </source>
</evidence>
<evidence type="ECO:0000255" key="3">
    <source>
        <dbReference type="PROSITE-ProRule" id="PRU00056"/>
    </source>
</evidence>
<evidence type="ECO:0000269" key="4">
    <source>
    </source>
</evidence>
<evidence type="ECO:0000305" key="5"/>